<dbReference type="EC" id="4.1.1.50" evidence="1"/>
<dbReference type="EMBL" id="CP000438">
    <property type="protein sequence ID" value="ABJ15615.1"/>
    <property type="molecule type" value="Genomic_DNA"/>
</dbReference>
<dbReference type="RefSeq" id="WP_003085223.1">
    <property type="nucleotide sequence ID" value="NZ_CP034244.1"/>
</dbReference>
<dbReference type="SMR" id="Q02TB2"/>
<dbReference type="KEGG" id="pau:PA14_08390"/>
<dbReference type="PseudoCAP" id="PA14_08390"/>
<dbReference type="HOGENOM" id="CLU_092007_0_0_6"/>
<dbReference type="BioCyc" id="PAER208963:G1G74-695-MONOMER"/>
<dbReference type="UniPathway" id="UPA00331">
    <property type="reaction ID" value="UER00451"/>
</dbReference>
<dbReference type="Proteomes" id="UP000000653">
    <property type="component" value="Chromosome"/>
</dbReference>
<dbReference type="GO" id="GO:0005829">
    <property type="term" value="C:cytosol"/>
    <property type="evidence" value="ECO:0007669"/>
    <property type="project" value="TreeGrafter"/>
</dbReference>
<dbReference type="GO" id="GO:0004014">
    <property type="term" value="F:adenosylmethionine decarboxylase activity"/>
    <property type="evidence" value="ECO:0007669"/>
    <property type="project" value="UniProtKB-UniRule"/>
</dbReference>
<dbReference type="GO" id="GO:0008295">
    <property type="term" value="P:spermidine biosynthetic process"/>
    <property type="evidence" value="ECO:0007669"/>
    <property type="project" value="UniProtKB-UniRule"/>
</dbReference>
<dbReference type="FunFam" id="3.60.90.10:FF:000001">
    <property type="entry name" value="S-adenosylmethionine decarboxylase proenzyme"/>
    <property type="match status" value="1"/>
</dbReference>
<dbReference type="Gene3D" id="3.60.90.10">
    <property type="entry name" value="S-adenosylmethionine decarboxylase"/>
    <property type="match status" value="1"/>
</dbReference>
<dbReference type="HAMAP" id="MF_00465">
    <property type="entry name" value="AdoMetDC_2"/>
    <property type="match status" value="1"/>
</dbReference>
<dbReference type="InterPro" id="IPR003826">
    <property type="entry name" value="AdoMetDC_fam_prok"/>
</dbReference>
<dbReference type="InterPro" id="IPR009165">
    <property type="entry name" value="S-AdoMet_deCO2ase_bac"/>
</dbReference>
<dbReference type="InterPro" id="IPR016067">
    <property type="entry name" value="S-AdoMet_deCO2ase_core"/>
</dbReference>
<dbReference type="NCBIfam" id="TIGR03331">
    <property type="entry name" value="SAM_DCase_Eco"/>
    <property type="match status" value="1"/>
</dbReference>
<dbReference type="PANTHER" id="PTHR33866">
    <property type="entry name" value="S-ADENOSYLMETHIONINE DECARBOXYLASE PROENZYME"/>
    <property type="match status" value="1"/>
</dbReference>
<dbReference type="PANTHER" id="PTHR33866:SF1">
    <property type="entry name" value="S-ADENOSYLMETHIONINE DECARBOXYLASE PROENZYME"/>
    <property type="match status" value="1"/>
</dbReference>
<dbReference type="Pfam" id="PF02675">
    <property type="entry name" value="AdoMet_dc"/>
    <property type="match status" value="1"/>
</dbReference>
<dbReference type="PIRSF" id="PIRSF001356">
    <property type="entry name" value="SAM_decarboxylas"/>
    <property type="match status" value="1"/>
</dbReference>
<dbReference type="SUPFAM" id="SSF56276">
    <property type="entry name" value="S-adenosylmethionine decarboxylase"/>
    <property type="match status" value="1"/>
</dbReference>
<organism>
    <name type="scientific">Pseudomonas aeruginosa (strain UCBPP-PA14)</name>
    <dbReference type="NCBI Taxonomy" id="208963"/>
    <lineage>
        <taxon>Bacteria</taxon>
        <taxon>Pseudomonadati</taxon>
        <taxon>Pseudomonadota</taxon>
        <taxon>Gammaproteobacteria</taxon>
        <taxon>Pseudomonadales</taxon>
        <taxon>Pseudomonadaceae</taxon>
        <taxon>Pseudomonas</taxon>
    </lineage>
</organism>
<name>SPED_PSEAB</name>
<sequence length="264" mass="30508">MKSKLKLHGFNNLTKTLSFNIYDICYAETPEDLQAYVQYIDEEYDAERLTQILTDVVDIIGANILNIARQDYDPQGASVTILISEQPVTPTDSQIEESPGPLPDTILAHLDKSHITVHTYPEIHPVDGIATFRVDIDVSTCGVISPLKALNYLIHQFDSDIVTVDYRVRGFTRDIEGRKHFIDHEINSIQNYLSDDTREAYQMTDVNVYQENLFHTKMLLKDFELENYLFGDATRTLSTEQREQVTERLKHEMLEIFYARNMPR</sequence>
<comment type="function">
    <text evidence="1">Catalyzes the decarboxylation of S-adenosylmethionine to S-adenosylmethioninamine (dcAdoMet), the propylamine donor required for the synthesis of the polyamines spermine and spermidine from the diamine putrescine.</text>
</comment>
<comment type="catalytic activity">
    <reaction evidence="1">
        <text>S-adenosyl-L-methionine + H(+) = S-adenosyl 3-(methylsulfanyl)propylamine + CO2</text>
        <dbReference type="Rhea" id="RHEA:15981"/>
        <dbReference type="ChEBI" id="CHEBI:15378"/>
        <dbReference type="ChEBI" id="CHEBI:16526"/>
        <dbReference type="ChEBI" id="CHEBI:57443"/>
        <dbReference type="ChEBI" id="CHEBI:59789"/>
        <dbReference type="EC" id="4.1.1.50"/>
    </reaction>
</comment>
<comment type="cofactor">
    <cofactor evidence="1">
        <name>pyruvate</name>
        <dbReference type="ChEBI" id="CHEBI:15361"/>
    </cofactor>
    <text evidence="1">Binds 1 pyruvoyl group covalently per subunit.</text>
</comment>
<comment type="pathway">
    <text evidence="1">Amine and polyamine biosynthesis; S-adenosylmethioninamine biosynthesis; S-adenosylmethioninamine from S-adenosyl-L-methionine: step 1/1.</text>
</comment>
<comment type="subunit">
    <text evidence="1">Heterooctamer of four alpha and four beta chains arranged as a tetramer of alpha/beta heterodimers.</text>
</comment>
<comment type="PTM">
    <text evidence="1">Is synthesized initially as an inactive proenzyme. Formation of the active enzyme involves a self-maturation process in which the active site pyruvoyl group is generated from an internal serine residue via an autocatalytic post-translational modification. Two non-identical subunits are generated from the proenzyme in this reaction, and the pyruvate is formed at the N-terminus of the alpha chain, which is derived from the carboxyl end of the proenzyme. The post-translation cleavage follows an unusual pathway, termed non-hydrolytic serinolysis, in which the side chain hydroxyl group of the serine supplies its oxygen atom to form the C-terminus of the beta chain, while the remainder of the serine residue undergoes an oxidative deamination to produce ammonia and the pyruvoyl group blocking the N-terminus of the alpha chain.</text>
</comment>
<comment type="similarity">
    <text evidence="1">Belongs to the prokaryotic AdoMetDC family. Type 2 subfamily.</text>
</comment>
<proteinExistence type="inferred from homology"/>
<keyword id="KW-0068">Autocatalytic cleavage</keyword>
<keyword id="KW-0210">Decarboxylase</keyword>
<keyword id="KW-0456">Lyase</keyword>
<keyword id="KW-0620">Polyamine biosynthesis</keyword>
<keyword id="KW-0670">Pyruvate</keyword>
<keyword id="KW-0949">S-adenosyl-L-methionine</keyword>
<keyword id="KW-0704">Schiff base</keyword>
<keyword id="KW-0745">Spermidine biosynthesis</keyword>
<keyword id="KW-0865">Zymogen</keyword>
<accession>Q02TB2</accession>
<feature type="chain" id="PRO_1000013691" description="S-adenosylmethionine decarboxylase beta chain" evidence="1">
    <location>
        <begin position="1"/>
        <end position="112"/>
    </location>
</feature>
<feature type="chain" id="PRO_0000315017" description="S-adenosylmethionine decarboxylase alpha chain" evidence="1">
    <location>
        <begin position="113"/>
        <end position="264"/>
    </location>
</feature>
<feature type="active site" description="Schiff-base intermediate with substrate; via pyruvic acid" evidence="1">
    <location>
        <position position="113"/>
    </location>
</feature>
<feature type="active site" description="Proton acceptor; for processing activity" evidence="1">
    <location>
        <position position="118"/>
    </location>
</feature>
<feature type="active site" description="Proton donor; for catalytic activity" evidence="1">
    <location>
        <position position="141"/>
    </location>
</feature>
<feature type="site" description="Cleavage (non-hydrolytic); by autolysis" evidence="1">
    <location>
        <begin position="112"/>
        <end position="113"/>
    </location>
</feature>
<feature type="modified residue" description="Pyruvic acid (Ser); by autocatalysis" evidence="1">
    <location>
        <position position="113"/>
    </location>
</feature>
<reference key="1">
    <citation type="journal article" date="2006" name="Genome Biol.">
        <title>Genomic analysis reveals that Pseudomonas aeruginosa virulence is combinatorial.</title>
        <authorList>
            <person name="Lee D.G."/>
            <person name="Urbach J.M."/>
            <person name="Wu G."/>
            <person name="Liberati N.T."/>
            <person name="Feinbaum R.L."/>
            <person name="Miyata S."/>
            <person name="Diggins L.T."/>
            <person name="He J."/>
            <person name="Saucier M."/>
            <person name="Deziel E."/>
            <person name="Friedman L."/>
            <person name="Li L."/>
            <person name="Grills G."/>
            <person name="Montgomery K."/>
            <person name="Kucherlapati R."/>
            <person name="Rahme L.G."/>
            <person name="Ausubel F.M."/>
        </authorList>
    </citation>
    <scope>NUCLEOTIDE SEQUENCE [LARGE SCALE GENOMIC DNA]</scope>
    <source>
        <strain>UCBPP-PA14</strain>
    </source>
</reference>
<gene>
    <name evidence="1" type="primary">speD</name>
    <name type="ordered locus">PA14_08390</name>
</gene>
<evidence type="ECO:0000255" key="1">
    <source>
        <dbReference type="HAMAP-Rule" id="MF_00465"/>
    </source>
</evidence>
<protein>
    <recommendedName>
        <fullName evidence="1">S-adenosylmethionine decarboxylase proenzyme</fullName>
        <shortName evidence="1">AdoMetDC</shortName>
        <shortName evidence="1">SAMDC</shortName>
        <ecNumber evidence="1">4.1.1.50</ecNumber>
    </recommendedName>
    <component>
        <recommendedName>
            <fullName evidence="1">S-adenosylmethionine decarboxylase beta chain</fullName>
        </recommendedName>
    </component>
    <component>
        <recommendedName>
            <fullName evidence="1">S-adenosylmethionine decarboxylase alpha chain</fullName>
        </recommendedName>
    </component>
</protein>